<feature type="chain" id="PRO_1000082206" description="Succinate--CoA ligase [ADP-forming] subunit beta">
    <location>
        <begin position="1"/>
        <end position="379"/>
    </location>
</feature>
<feature type="domain" description="ATP-grasp" evidence="1">
    <location>
        <begin position="9"/>
        <end position="237"/>
    </location>
</feature>
<feature type="binding site" evidence="1">
    <location>
        <position position="45"/>
    </location>
    <ligand>
        <name>ATP</name>
        <dbReference type="ChEBI" id="CHEBI:30616"/>
    </ligand>
</feature>
<feature type="binding site" evidence="1">
    <location>
        <begin position="52"/>
        <end position="54"/>
    </location>
    <ligand>
        <name>ATP</name>
        <dbReference type="ChEBI" id="CHEBI:30616"/>
    </ligand>
</feature>
<feature type="binding site" evidence="1">
    <location>
        <position position="94"/>
    </location>
    <ligand>
        <name>ATP</name>
        <dbReference type="ChEBI" id="CHEBI:30616"/>
    </ligand>
</feature>
<feature type="binding site" evidence="1">
    <location>
        <position position="99"/>
    </location>
    <ligand>
        <name>ATP</name>
        <dbReference type="ChEBI" id="CHEBI:30616"/>
    </ligand>
</feature>
<feature type="binding site" evidence="1">
    <location>
        <position position="192"/>
    </location>
    <ligand>
        <name>Mg(2+)</name>
        <dbReference type="ChEBI" id="CHEBI:18420"/>
    </ligand>
</feature>
<feature type="binding site" evidence="1">
    <location>
        <position position="206"/>
    </location>
    <ligand>
        <name>Mg(2+)</name>
        <dbReference type="ChEBI" id="CHEBI:18420"/>
    </ligand>
</feature>
<feature type="binding site" evidence="1">
    <location>
        <position position="257"/>
    </location>
    <ligand>
        <name>substrate</name>
        <note>ligand shared with subunit alpha</note>
    </ligand>
</feature>
<feature type="binding site" evidence="1">
    <location>
        <begin position="314"/>
        <end position="316"/>
    </location>
    <ligand>
        <name>substrate</name>
        <note>ligand shared with subunit alpha</note>
    </ligand>
</feature>
<keyword id="KW-0067">ATP-binding</keyword>
<keyword id="KW-0436">Ligase</keyword>
<keyword id="KW-0460">Magnesium</keyword>
<keyword id="KW-0479">Metal-binding</keyword>
<keyword id="KW-0547">Nucleotide-binding</keyword>
<keyword id="KW-0816">Tricarboxylic acid cycle</keyword>
<organism>
    <name type="scientific">Roseiflexus sp. (strain RS-1)</name>
    <dbReference type="NCBI Taxonomy" id="357808"/>
    <lineage>
        <taxon>Bacteria</taxon>
        <taxon>Bacillati</taxon>
        <taxon>Chloroflexota</taxon>
        <taxon>Chloroflexia</taxon>
        <taxon>Chloroflexales</taxon>
        <taxon>Roseiflexineae</taxon>
        <taxon>Roseiflexaceae</taxon>
        <taxon>Roseiflexus</taxon>
    </lineage>
</organism>
<comment type="function">
    <text evidence="1">Succinyl-CoA synthetase functions in the citric acid cycle (TCA), coupling the hydrolysis of succinyl-CoA to the synthesis of either ATP or GTP and thus represents the only step of substrate-level phosphorylation in the TCA. The beta subunit provides nucleotide specificity of the enzyme and binds the substrate succinate, while the binding sites for coenzyme A and phosphate are found in the alpha subunit.</text>
</comment>
<comment type="catalytic activity">
    <reaction evidence="1">
        <text>succinate + ATP + CoA = succinyl-CoA + ADP + phosphate</text>
        <dbReference type="Rhea" id="RHEA:17661"/>
        <dbReference type="ChEBI" id="CHEBI:30031"/>
        <dbReference type="ChEBI" id="CHEBI:30616"/>
        <dbReference type="ChEBI" id="CHEBI:43474"/>
        <dbReference type="ChEBI" id="CHEBI:57287"/>
        <dbReference type="ChEBI" id="CHEBI:57292"/>
        <dbReference type="ChEBI" id="CHEBI:456216"/>
        <dbReference type="EC" id="6.2.1.5"/>
    </reaction>
    <physiologicalReaction direction="right-to-left" evidence="1">
        <dbReference type="Rhea" id="RHEA:17663"/>
    </physiologicalReaction>
</comment>
<comment type="catalytic activity">
    <reaction evidence="1">
        <text>GTP + succinate + CoA = succinyl-CoA + GDP + phosphate</text>
        <dbReference type="Rhea" id="RHEA:22120"/>
        <dbReference type="ChEBI" id="CHEBI:30031"/>
        <dbReference type="ChEBI" id="CHEBI:37565"/>
        <dbReference type="ChEBI" id="CHEBI:43474"/>
        <dbReference type="ChEBI" id="CHEBI:57287"/>
        <dbReference type="ChEBI" id="CHEBI:57292"/>
        <dbReference type="ChEBI" id="CHEBI:58189"/>
    </reaction>
    <physiologicalReaction direction="right-to-left" evidence="1">
        <dbReference type="Rhea" id="RHEA:22122"/>
    </physiologicalReaction>
</comment>
<comment type="cofactor">
    <cofactor evidence="1">
        <name>Mg(2+)</name>
        <dbReference type="ChEBI" id="CHEBI:18420"/>
    </cofactor>
    <text evidence="1">Binds 1 Mg(2+) ion per subunit.</text>
</comment>
<comment type="pathway">
    <text evidence="1">Carbohydrate metabolism; tricarboxylic acid cycle; succinate from succinyl-CoA (ligase route): step 1/1.</text>
</comment>
<comment type="subunit">
    <text evidence="1">Heterotetramer of two alpha and two beta subunits.</text>
</comment>
<comment type="similarity">
    <text evidence="1">Belongs to the succinate/malate CoA ligase beta subunit family.</text>
</comment>
<gene>
    <name evidence="1" type="primary">sucC</name>
    <name type="ordered locus">RoseRS_3930</name>
</gene>
<proteinExistence type="inferred from homology"/>
<name>SUCC_ROSS1</name>
<evidence type="ECO:0000255" key="1">
    <source>
        <dbReference type="HAMAP-Rule" id="MF_00558"/>
    </source>
</evidence>
<dbReference type="EC" id="6.2.1.5" evidence="1"/>
<dbReference type="EMBL" id="CP000686">
    <property type="protein sequence ID" value="ABQ92283.1"/>
    <property type="molecule type" value="Genomic_DNA"/>
</dbReference>
<dbReference type="RefSeq" id="WP_011958623.1">
    <property type="nucleotide sequence ID" value="NC_009523.1"/>
</dbReference>
<dbReference type="SMR" id="A5V080"/>
<dbReference type="STRING" id="357808.RoseRS_3930"/>
<dbReference type="KEGG" id="rrs:RoseRS_3930"/>
<dbReference type="eggNOG" id="COG0045">
    <property type="taxonomic scope" value="Bacteria"/>
</dbReference>
<dbReference type="HOGENOM" id="CLU_037430_0_2_0"/>
<dbReference type="OrthoDB" id="9802602at2"/>
<dbReference type="UniPathway" id="UPA00223">
    <property type="reaction ID" value="UER00999"/>
</dbReference>
<dbReference type="Proteomes" id="UP000006554">
    <property type="component" value="Chromosome"/>
</dbReference>
<dbReference type="GO" id="GO:0005829">
    <property type="term" value="C:cytosol"/>
    <property type="evidence" value="ECO:0007669"/>
    <property type="project" value="TreeGrafter"/>
</dbReference>
<dbReference type="GO" id="GO:0042709">
    <property type="term" value="C:succinate-CoA ligase complex"/>
    <property type="evidence" value="ECO:0007669"/>
    <property type="project" value="TreeGrafter"/>
</dbReference>
<dbReference type="GO" id="GO:0005524">
    <property type="term" value="F:ATP binding"/>
    <property type="evidence" value="ECO:0007669"/>
    <property type="project" value="UniProtKB-UniRule"/>
</dbReference>
<dbReference type="GO" id="GO:0000287">
    <property type="term" value="F:magnesium ion binding"/>
    <property type="evidence" value="ECO:0007669"/>
    <property type="project" value="UniProtKB-UniRule"/>
</dbReference>
<dbReference type="GO" id="GO:0004775">
    <property type="term" value="F:succinate-CoA ligase (ADP-forming) activity"/>
    <property type="evidence" value="ECO:0007669"/>
    <property type="project" value="UniProtKB-UniRule"/>
</dbReference>
<dbReference type="GO" id="GO:0004776">
    <property type="term" value="F:succinate-CoA ligase (GDP-forming) activity"/>
    <property type="evidence" value="ECO:0007669"/>
    <property type="project" value="RHEA"/>
</dbReference>
<dbReference type="GO" id="GO:0006104">
    <property type="term" value="P:succinyl-CoA metabolic process"/>
    <property type="evidence" value="ECO:0007669"/>
    <property type="project" value="TreeGrafter"/>
</dbReference>
<dbReference type="GO" id="GO:0006099">
    <property type="term" value="P:tricarboxylic acid cycle"/>
    <property type="evidence" value="ECO:0007669"/>
    <property type="project" value="UniProtKB-UniRule"/>
</dbReference>
<dbReference type="FunFam" id="3.30.1490.20:FF:000014">
    <property type="entry name" value="Succinate--CoA ligase [ADP-forming] subunit beta"/>
    <property type="match status" value="1"/>
</dbReference>
<dbReference type="FunFam" id="3.30.470.20:FF:000002">
    <property type="entry name" value="Succinate--CoA ligase [ADP-forming] subunit beta"/>
    <property type="match status" value="1"/>
</dbReference>
<dbReference type="FunFam" id="3.40.50.261:FF:000001">
    <property type="entry name" value="Succinate--CoA ligase [ADP-forming] subunit beta"/>
    <property type="match status" value="1"/>
</dbReference>
<dbReference type="Gene3D" id="3.30.1490.20">
    <property type="entry name" value="ATP-grasp fold, A domain"/>
    <property type="match status" value="1"/>
</dbReference>
<dbReference type="Gene3D" id="3.30.470.20">
    <property type="entry name" value="ATP-grasp fold, B domain"/>
    <property type="match status" value="1"/>
</dbReference>
<dbReference type="Gene3D" id="3.40.50.261">
    <property type="entry name" value="Succinyl-CoA synthetase domains"/>
    <property type="match status" value="1"/>
</dbReference>
<dbReference type="HAMAP" id="MF_00558">
    <property type="entry name" value="Succ_CoA_beta"/>
    <property type="match status" value="1"/>
</dbReference>
<dbReference type="InterPro" id="IPR011761">
    <property type="entry name" value="ATP-grasp"/>
</dbReference>
<dbReference type="InterPro" id="IPR013650">
    <property type="entry name" value="ATP-grasp_succ-CoA_synth-type"/>
</dbReference>
<dbReference type="InterPro" id="IPR013815">
    <property type="entry name" value="ATP_grasp_subdomain_1"/>
</dbReference>
<dbReference type="InterPro" id="IPR017866">
    <property type="entry name" value="Succ-CoA_synthase_bsu_CS"/>
</dbReference>
<dbReference type="InterPro" id="IPR005811">
    <property type="entry name" value="SUCC_ACL_C"/>
</dbReference>
<dbReference type="InterPro" id="IPR005809">
    <property type="entry name" value="Succ_CoA_ligase-like_bsu"/>
</dbReference>
<dbReference type="InterPro" id="IPR016102">
    <property type="entry name" value="Succinyl-CoA_synth-like"/>
</dbReference>
<dbReference type="NCBIfam" id="NF001913">
    <property type="entry name" value="PRK00696.1"/>
    <property type="match status" value="1"/>
</dbReference>
<dbReference type="NCBIfam" id="TIGR01016">
    <property type="entry name" value="sucCoAbeta"/>
    <property type="match status" value="1"/>
</dbReference>
<dbReference type="PANTHER" id="PTHR11815:SF10">
    <property type="entry name" value="SUCCINATE--COA LIGASE [GDP-FORMING] SUBUNIT BETA, MITOCHONDRIAL"/>
    <property type="match status" value="1"/>
</dbReference>
<dbReference type="PANTHER" id="PTHR11815">
    <property type="entry name" value="SUCCINYL-COA SYNTHETASE BETA CHAIN"/>
    <property type="match status" value="1"/>
</dbReference>
<dbReference type="Pfam" id="PF08442">
    <property type="entry name" value="ATP-grasp_2"/>
    <property type="match status" value="1"/>
</dbReference>
<dbReference type="Pfam" id="PF00549">
    <property type="entry name" value="Ligase_CoA"/>
    <property type="match status" value="1"/>
</dbReference>
<dbReference type="PIRSF" id="PIRSF001554">
    <property type="entry name" value="SucCS_beta"/>
    <property type="match status" value="1"/>
</dbReference>
<dbReference type="SUPFAM" id="SSF56059">
    <property type="entry name" value="Glutathione synthetase ATP-binding domain-like"/>
    <property type="match status" value="1"/>
</dbReference>
<dbReference type="SUPFAM" id="SSF52210">
    <property type="entry name" value="Succinyl-CoA synthetase domains"/>
    <property type="match status" value="1"/>
</dbReference>
<dbReference type="PROSITE" id="PS50975">
    <property type="entry name" value="ATP_GRASP"/>
    <property type="match status" value="1"/>
</dbReference>
<dbReference type="PROSITE" id="PS01217">
    <property type="entry name" value="SUCCINYL_COA_LIG_3"/>
    <property type="match status" value="1"/>
</dbReference>
<sequence>MKLHEYQARDILARYGIPVTGGGVATTPAEARTIAEQIGGRVVVKAQVFVGGRGKAGGVKLADTPEQAEQVASQILGMNIKGLTVEKVLVAEAITYEREIYLGAIMDRASRRIVMMASAEGGVEIEEVARTNPEAIVKVAAHPMMGLLDFQARDLAYGIGLTDGRQARQFAQIATALYRAYMDVDASLAEINPLVVRADGSLQALDSKIVLDDSGLFRHPDLEAMRDSSDEPEAEQRAREAGITYIKLDGNIGCMVNGAGLAMATMDVVKLYGGEPANFLDIGGGAGKEKVKTALQIILSDPNVKAVMFNIFGGITRVDEVAKGIIAALEEVNTDVPMIARLVGTNEEEGRRILAESALIPAATLAEAAEKAVQAAQSR</sequence>
<reference key="1">
    <citation type="submission" date="2007-04" db="EMBL/GenBank/DDBJ databases">
        <title>Complete sequence of Roseiflexus sp. RS-1.</title>
        <authorList>
            <consortium name="US DOE Joint Genome Institute"/>
            <person name="Copeland A."/>
            <person name="Lucas S."/>
            <person name="Lapidus A."/>
            <person name="Barry K."/>
            <person name="Detter J.C."/>
            <person name="Glavina del Rio T."/>
            <person name="Hammon N."/>
            <person name="Israni S."/>
            <person name="Dalin E."/>
            <person name="Tice H."/>
            <person name="Pitluck S."/>
            <person name="Chertkov O."/>
            <person name="Brettin T."/>
            <person name="Bruce D."/>
            <person name="Han C."/>
            <person name="Schmutz J."/>
            <person name="Larimer F."/>
            <person name="Land M."/>
            <person name="Hauser L."/>
            <person name="Kyrpides N."/>
            <person name="Mikhailova N."/>
            <person name="Bryant D.A."/>
            <person name="Richardson P."/>
        </authorList>
    </citation>
    <scope>NUCLEOTIDE SEQUENCE [LARGE SCALE GENOMIC DNA]</scope>
    <source>
        <strain>RS-1</strain>
    </source>
</reference>
<protein>
    <recommendedName>
        <fullName evidence="1">Succinate--CoA ligase [ADP-forming] subunit beta</fullName>
        <ecNumber evidence="1">6.2.1.5</ecNumber>
    </recommendedName>
    <alternativeName>
        <fullName evidence="1">Succinyl-CoA synthetase subunit beta</fullName>
        <shortName evidence="1">SCS-beta</shortName>
    </alternativeName>
</protein>
<accession>A5V080</accession>